<gene>
    <name type="primary">DGA1</name>
    <name type="ordered locus">ACR140C</name>
</gene>
<feature type="chain" id="PRO_0000233000" description="Diacylglycerol O-acyltransferase 1">
    <location>
        <begin position="1"/>
        <end position="461"/>
    </location>
</feature>
<feature type="topological domain" description="Cytoplasmic" evidence="1">
    <location>
        <begin position="1"/>
        <end position="112"/>
    </location>
</feature>
<feature type="transmembrane region" description="Helical" evidence="3">
    <location>
        <begin position="113"/>
        <end position="133"/>
    </location>
</feature>
<feature type="topological domain" description="Lumenal" evidence="1">
    <location>
        <begin position="134"/>
        <end position="230"/>
    </location>
</feature>
<feature type="transmembrane region" description="Helical" evidence="3">
    <location>
        <begin position="231"/>
        <end position="251"/>
    </location>
</feature>
<feature type="topological domain" description="Cytoplasmic" evidence="3">
    <location>
        <begin position="252"/>
        <end position="258"/>
    </location>
</feature>
<feature type="transmembrane region" description="Helical" evidence="3">
    <location>
        <begin position="259"/>
        <end position="279"/>
    </location>
</feature>
<feature type="topological domain" description="Lumenal" evidence="1">
    <location>
        <begin position="280"/>
        <end position="332"/>
    </location>
</feature>
<feature type="transmembrane region" description="Helical" evidence="3">
    <location>
        <begin position="333"/>
        <end position="353"/>
    </location>
</feature>
<feature type="topological domain" description="Cytoplasmic" evidence="1">
    <location>
        <begin position="354"/>
        <end position="461"/>
    </location>
</feature>
<feature type="region of interest" description="Disordered" evidence="4">
    <location>
        <begin position="1"/>
        <end position="38"/>
    </location>
</feature>
<feature type="compositionally biased region" description="Basic and acidic residues" evidence="4">
    <location>
        <begin position="7"/>
        <end position="18"/>
    </location>
</feature>
<feature type="compositionally biased region" description="Polar residues" evidence="4">
    <location>
        <begin position="21"/>
        <end position="33"/>
    </location>
</feature>
<keyword id="KW-0012">Acyltransferase</keyword>
<keyword id="KW-0256">Endoplasmic reticulum</keyword>
<keyword id="KW-0319">Glycerol metabolism</keyword>
<keyword id="KW-0444">Lipid biosynthesis</keyword>
<keyword id="KW-0551">Lipid droplet</keyword>
<keyword id="KW-0443">Lipid metabolism</keyword>
<keyword id="KW-0472">Membrane</keyword>
<keyword id="KW-1185">Reference proteome</keyword>
<keyword id="KW-0808">Transferase</keyword>
<keyword id="KW-0812">Transmembrane</keyword>
<keyword id="KW-1133">Transmembrane helix</keyword>
<sequence>MQDSMDDSLREAEGRQDDSEVSSGTTLGSSTPEDSGVTAKLRKKYQMASALLRRELEELSVYDAKTAGVSGRSSGSGSGGLALLGGRFHVAPLRIPARRRLQTLVVAWHTSSFIYMTVLVLFLAANPLMWWFMVPYMVYYVWNRSPANGGVVRRYSPRLRSLALWRYYCEYYPISLHKSEDLAPTFVPDPRGAEPREWKLRLWLWPTRVELLNLTLQWTRARPQVATGPRYIFGYHPHGVGALGAFGAIATEGCNWSKVFAGIPACLCTLVNQFQIPIYRDYLLGLGCTSVARKNVLKVLEQNYSVCIVVGGAQEALLSRVGSTELVLNKRKGFIKLALETGNVNLVPIYAFGETDCFNVLDTGNESYLRKFQLWIKKTYGFTIPFFFARGVFNYDFGFLPFRNPINVVVGKPVYVDKRRTNPTMEEIDHYHDLYVQELRNVFDKNKHKFGYAGKELKIVE</sequence>
<dbReference type="EC" id="2.3.1.20" evidence="2"/>
<dbReference type="EMBL" id="AE016816">
    <property type="protein sequence ID" value="AAS51366.1"/>
    <property type="molecule type" value="Genomic_DNA"/>
</dbReference>
<dbReference type="RefSeq" id="NP_983542.1">
    <property type="nucleotide sequence ID" value="NM_208895.1"/>
</dbReference>
<dbReference type="FunCoup" id="Q75BY0">
    <property type="interactions" value="230"/>
</dbReference>
<dbReference type="STRING" id="284811.Q75BY0"/>
<dbReference type="EnsemblFungi" id="AAS51366">
    <property type="protein sequence ID" value="AAS51366"/>
    <property type="gene ID" value="AGOS_ACR140C"/>
</dbReference>
<dbReference type="GeneID" id="4619674"/>
<dbReference type="KEGG" id="ago:AGOS_ACR140C"/>
<dbReference type="eggNOG" id="KOG0831">
    <property type="taxonomic scope" value="Eukaryota"/>
</dbReference>
<dbReference type="HOGENOM" id="CLU_023995_4_1_1"/>
<dbReference type="InParanoid" id="Q75BY0"/>
<dbReference type="OMA" id="RSQWMRR"/>
<dbReference type="OrthoDB" id="264532at2759"/>
<dbReference type="UniPathway" id="UPA00282"/>
<dbReference type="Proteomes" id="UP000000591">
    <property type="component" value="Chromosome III"/>
</dbReference>
<dbReference type="GO" id="GO:0032541">
    <property type="term" value="C:cortical endoplasmic reticulum"/>
    <property type="evidence" value="ECO:0007669"/>
    <property type="project" value="EnsemblFungi"/>
</dbReference>
<dbReference type="GO" id="GO:0005789">
    <property type="term" value="C:endoplasmic reticulum membrane"/>
    <property type="evidence" value="ECO:0000318"/>
    <property type="project" value="GO_Central"/>
</dbReference>
<dbReference type="GO" id="GO:0005811">
    <property type="term" value="C:lipid droplet"/>
    <property type="evidence" value="ECO:0007669"/>
    <property type="project" value="UniProtKB-SubCell"/>
</dbReference>
<dbReference type="GO" id="GO:0097038">
    <property type="term" value="C:perinuclear endoplasmic reticulum"/>
    <property type="evidence" value="ECO:0007669"/>
    <property type="project" value="EnsemblFungi"/>
</dbReference>
<dbReference type="GO" id="GO:0003846">
    <property type="term" value="F:2-acylglycerol O-acyltransferase activity"/>
    <property type="evidence" value="ECO:0007669"/>
    <property type="project" value="RHEA"/>
</dbReference>
<dbReference type="GO" id="GO:0004144">
    <property type="term" value="F:diacylglycerol O-acyltransferase activity"/>
    <property type="evidence" value="ECO:0000318"/>
    <property type="project" value="GO_Central"/>
</dbReference>
<dbReference type="GO" id="GO:0006672">
    <property type="term" value="P:ceramide metabolic process"/>
    <property type="evidence" value="ECO:0007669"/>
    <property type="project" value="EnsemblFungi"/>
</dbReference>
<dbReference type="GO" id="GO:0006071">
    <property type="term" value="P:glycerol metabolic process"/>
    <property type="evidence" value="ECO:0007669"/>
    <property type="project" value="UniProtKB-KW"/>
</dbReference>
<dbReference type="GO" id="GO:0035356">
    <property type="term" value="P:intracellular triglyceride homeostasis"/>
    <property type="evidence" value="ECO:0007669"/>
    <property type="project" value="EnsemblFungi"/>
</dbReference>
<dbReference type="GO" id="GO:0140042">
    <property type="term" value="P:lipid droplet formation"/>
    <property type="evidence" value="ECO:0007669"/>
    <property type="project" value="EnsemblFungi"/>
</dbReference>
<dbReference type="GO" id="GO:0019432">
    <property type="term" value="P:triglyceride biosynthetic process"/>
    <property type="evidence" value="ECO:0000318"/>
    <property type="project" value="GO_Central"/>
</dbReference>
<dbReference type="CDD" id="cd07987">
    <property type="entry name" value="LPLAT_MGAT-like"/>
    <property type="match status" value="1"/>
</dbReference>
<dbReference type="InterPro" id="IPR007130">
    <property type="entry name" value="DAGAT"/>
</dbReference>
<dbReference type="PANTHER" id="PTHR12317:SF0">
    <property type="entry name" value="ACYLTRANSFERASE"/>
    <property type="match status" value="1"/>
</dbReference>
<dbReference type="PANTHER" id="PTHR12317">
    <property type="entry name" value="DIACYLGLYCEROL O-ACYLTRANSFERASE"/>
    <property type="match status" value="1"/>
</dbReference>
<dbReference type="Pfam" id="PF03982">
    <property type="entry name" value="DAGAT"/>
    <property type="match status" value="2"/>
</dbReference>
<reference key="1">
    <citation type="journal article" date="2004" name="Science">
        <title>The Ashbya gossypii genome as a tool for mapping the ancient Saccharomyces cerevisiae genome.</title>
        <authorList>
            <person name="Dietrich F.S."/>
            <person name="Voegeli S."/>
            <person name="Brachat S."/>
            <person name="Lerch A."/>
            <person name="Gates K."/>
            <person name="Steiner S."/>
            <person name="Mohr C."/>
            <person name="Poehlmann R."/>
            <person name="Luedi P."/>
            <person name="Choi S."/>
            <person name="Wing R.A."/>
            <person name="Flavier A."/>
            <person name="Gaffney T.D."/>
            <person name="Philippsen P."/>
        </authorList>
    </citation>
    <scope>NUCLEOTIDE SEQUENCE [LARGE SCALE GENOMIC DNA]</scope>
    <source>
        <strain>ATCC 10895 / CBS 109.51 / FGSC 9923 / NRRL Y-1056</strain>
    </source>
</reference>
<reference key="2">
    <citation type="journal article" date="2013" name="G3 (Bethesda)">
        <title>Genomes of Ashbya fungi isolated from insects reveal four mating-type loci, numerous translocations, lack of transposons, and distinct gene duplications.</title>
        <authorList>
            <person name="Dietrich F.S."/>
            <person name="Voegeli S."/>
            <person name="Kuo S."/>
            <person name="Philippsen P."/>
        </authorList>
    </citation>
    <scope>GENOME REANNOTATION</scope>
    <source>
        <strain>ATCC 10895 / CBS 109.51 / FGSC 9923 / NRRL Y-1056</strain>
    </source>
</reference>
<organism>
    <name type="scientific">Eremothecium gossypii (strain ATCC 10895 / CBS 109.51 / FGSC 9923 / NRRL Y-1056)</name>
    <name type="common">Yeast</name>
    <name type="synonym">Ashbya gossypii</name>
    <dbReference type="NCBI Taxonomy" id="284811"/>
    <lineage>
        <taxon>Eukaryota</taxon>
        <taxon>Fungi</taxon>
        <taxon>Dikarya</taxon>
        <taxon>Ascomycota</taxon>
        <taxon>Saccharomycotina</taxon>
        <taxon>Saccharomycetes</taxon>
        <taxon>Saccharomycetales</taxon>
        <taxon>Saccharomycetaceae</taxon>
        <taxon>Eremothecium</taxon>
    </lineage>
</organism>
<proteinExistence type="inferred from homology"/>
<name>DGAT2_EREGS</name>
<evidence type="ECO:0000250" key="1"/>
<evidence type="ECO:0000250" key="2">
    <source>
        <dbReference type="UniProtKB" id="Q08650"/>
    </source>
</evidence>
<evidence type="ECO:0000255" key="3"/>
<evidence type="ECO:0000256" key="4">
    <source>
        <dbReference type="SAM" id="MobiDB-lite"/>
    </source>
</evidence>
<evidence type="ECO:0000305" key="5"/>
<comment type="function">
    <text evidence="2">Catalyzes the terminal and only committed step in triacylglycerol (TAG) synthesis by using diacylglycerol (DAG) and fatty acyl-CoA as substrates. Required for storage lipid synthesis. Major DAG esterifying enzyme in stationary phase when TAG production is particularly active. Involved in lipid particle synthesis from the endoplasmic reticulum, promoting localized TAG production at discrete ER subdomains.</text>
</comment>
<comment type="catalytic activity">
    <reaction evidence="2">
        <text>an acyl-CoA + a 1,2-diacyl-sn-glycerol = a triacyl-sn-glycerol + CoA</text>
        <dbReference type="Rhea" id="RHEA:10868"/>
        <dbReference type="ChEBI" id="CHEBI:17815"/>
        <dbReference type="ChEBI" id="CHEBI:57287"/>
        <dbReference type="ChEBI" id="CHEBI:58342"/>
        <dbReference type="ChEBI" id="CHEBI:64615"/>
        <dbReference type="EC" id="2.3.1.20"/>
    </reaction>
</comment>
<comment type="catalytic activity">
    <reaction evidence="2">
        <text>a 2-acylglycerol + an acyl-CoA = a 1,2-diacyl-sn-glycerol + CoA</text>
        <dbReference type="Rhea" id="RHEA:32947"/>
        <dbReference type="ChEBI" id="CHEBI:17389"/>
        <dbReference type="ChEBI" id="CHEBI:17815"/>
        <dbReference type="ChEBI" id="CHEBI:57287"/>
        <dbReference type="ChEBI" id="CHEBI:58342"/>
    </reaction>
</comment>
<comment type="pathway">
    <text evidence="2">Glycerolipid metabolism; triacylglycerol biosynthesis.</text>
</comment>
<comment type="subcellular location">
    <subcellularLocation>
        <location evidence="2">Lipid droplet</location>
    </subcellularLocation>
    <subcellularLocation>
        <location evidence="2">Endoplasmic reticulum membrane</location>
        <topology evidence="3">Multi-pass membrane protein</topology>
    </subcellularLocation>
    <text evidence="2">Localizes to sites of lipid droplet biogenesis in the endoplasmic reticulum.</text>
</comment>
<comment type="similarity">
    <text evidence="5">Belongs to the diacylglycerol acyltransferase family.</text>
</comment>
<protein>
    <recommendedName>
        <fullName>Diacylglycerol O-acyltransferase 1</fullName>
        <ecNumber evidence="2">2.3.1.20</ecNumber>
    </recommendedName>
</protein>
<accession>Q75BY0</accession>